<feature type="chain" id="PRO_0000140892" description="Methenyltetrahydromethanopterin cyclohydrolase">
    <location>
        <begin position="1"/>
        <end position="324"/>
    </location>
</feature>
<proteinExistence type="inferred from homology"/>
<keyword id="KW-0963">Cytoplasm</keyword>
<keyword id="KW-0378">Hydrolase</keyword>
<keyword id="KW-0554">One-carbon metabolism</keyword>
<comment type="function">
    <text evidence="1">Catalyzes the hydrolysis of methenyl-H(4)MPT(+) to 5-formyl-H(4)MPT.</text>
</comment>
<comment type="catalytic activity">
    <reaction>
        <text>5,10-methenyl-5,6,7,8-tetrahydromethanopterin + H2O = N(5)-formyl-5,6,7,8-tetrahydromethanopterin + H(+)</text>
        <dbReference type="Rhea" id="RHEA:19053"/>
        <dbReference type="ChEBI" id="CHEBI:15377"/>
        <dbReference type="ChEBI" id="CHEBI:15378"/>
        <dbReference type="ChEBI" id="CHEBI:58018"/>
        <dbReference type="ChEBI" id="CHEBI:58337"/>
        <dbReference type="EC" id="3.5.4.27"/>
    </reaction>
</comment>
<comment type="pathway">
    <text>One-carbon metabolism; formaldehyde degradation; formate from formaldehyde (H(4)MPT route): step 3/5.</text>
</comment>
<comment type="subunit">
    <text evidence="1">Homodimer.</text>
</comment>
<comment type="subcellular location">
    <subcellularLocation>
        <location evidence="1">Cytoplasm</location>
    </subcellularLocation>
</comment>
<comment type="similarity">
    <text evidence="2">Belongs to the MCH family.</text>
</comment>
<organism>
    <name type="scientific">Methylobacterium organophilum</name>
    <dbReference type="NCBI Taxonomy" id="410"/>
    <lineage>
        <taxon>Bacteria</taxon>
        <taxon>Pseudomonadati</taxon>
        <taxon>Pseudomonadota</taxon>
        <taxon>Alphaproteobacteria</taxon>
        <taxon>Hyphomicrobiales</taxon>
        <taxon>Methylobacteriaceae</taxon>
        <taxon>Methylobacterium</taxon>
    </lineage>
</organism>
<protein>
    <recommendedName>
        <fullName>Methenyltetrahydromethanopterin cyclohydrolase</fullName>
        <ecNumber>3.5.4.27</ecNumber>
    </recommendedName>
    <alternativeName>
        <fullName>Methenyl-H4MPT cyclohydrolase</fullName>
    </alternativeName>
</protein>
<evidence type="ECO:0000250" key="1"/>
<evidence type="ECO:0000305" key="2"/>
<sequence length="324" mass="33268">MSASQSYPSINALSGPLVERLVADAPTLRLSVSQAAGGARMVDAGAQARGSIEAGRRIAEICLGGLGTVTIAPSGPIASWPYSVTVHSADPVLACLGSQYAGWSLADETGDSGFFALGSGPGRAVAAVEDLYQELGFRDSATKTALVLEAAGGPPESVVAKVAEASGLKPEDLTFIYAPTQSLAGSTQVVARVLEVALHKAHTVGFDLHAIVDGIGSAPLSPPHPDFIKAMGRTNDAIIYGGRVQLFVDADDADAKQLAEQLPSTTSSDHGAPFAEIFARVNGDFYKIDGALFSPAEAIVTSVRSGATYRGGRLEPTLVDASFA</sequence>
<name>MCH_METOR</name>
<reference key="1">
    <citation type="journal article" date="1999" name="J. Bacteriol.">
        <title>Distribution of tetrahydromethanopterin-dependent enzymes in methylotrophic bacteria and phylogeny of methenyl tetrahydromethanopterin cyclohydrolases.</title>
        <authorList>
            <person name="Vorholt J.A."/>
            <person name="Chistoserdova L.V."/>
            <person name="Stolyar S.M."/>
            <person name="Thauer R.K."/>
            <person name="Lidstrom M.E."/>
        </authorList>
    </citation>
    <scope>NUCLEOTIDE SEQUENCE [GENOMIC DNA]</scope>
    <source>
        <strain>ATCC 27886 / DSM 760 / JCM 2833 / CCUG 55902 / LMG 6083 / NBRC 15689 / NCIMB 11278 / VKM B-2066 / XX</strain>
    </source>
</reference>
<accession>Q9RPW7</accession>
<dbReference type="EC" id="3.5.4.27"/>
<dbReference type="EMBL" id="AF142650">
    <property type="protein sequence ID" value="AAD55900.1"/>
    <property type="molecule type" value="Genomic_DNA"/>
</dbReference>
<dbReference type="SMR" id="Q9RPW7"/>
<dbReference type="UniPathway" id="UPA00562">
    <property type="reaction ID" value="UER00703"/>
</dbReference>
<dbReference type="GO" id="GO:0005737">
    <property type="term" value="C:cytoplasm"/>
    <property type="evidence" value="ECO:0007669"/>
    <property type="project" value="UniProtKB-SubCell"/>
</dbReference>
<dbReference type="GO" id="GO:0018759">
    <property type="term" value="F:methenyltetrahydromethanopterin cyclohydrolase activity"/>
    <property type="evidence" value="ECO:0007669"/>
    <property type="project" value="UniProtKB-UniRule"/>
</dbReference>
<dbReference type="GO" id="GO:0046294">
    <property type="term" value="P:formaldehyde catabolic process"/>
    <property type="evidence" value="ECO:0007669"/>
    <property type="project" value="UniProtKB-UniRule"/>
</dbReference>
<dbReference type="GO" id="GO:0006730">
    <property type="term" value="P:one-carbon metabolic process"/>
    <property type="evidence" value="ECO:0007669"/>
    <property type="project" value="UniProtKB-UniRule"/>
</dbReference>
<dbReference type="CDD" id="cd00545">
    <property type="entry name" value="MCH"/>
    <property type="match status" value="1"/>
</dbReference>
<dbReference type="Gene3D" id="3.10.340.11">
    <property type="entry name" value="Methenyltetrahydromethanopterin Cyclohydrolase, Chain A, domain 1"/>
    <property type="match status" value="1"/>
</dbReference>
<dbReference type="Gene3D" id="3.30.1030.10">
    <property type="entry name" value="Methenyltetrahydromethanopterin Cyclohydrolase, Chain A, domain 2"/>
    <property type="match status" value="1"/>
</dbReference>
<dbReference type="HAMAP" id="MF_00486">
    <property type="entry name" value="McH"/>
    <property type="match status" value="1"/>
</dbReference>
<dbReference type="InterPro" id="IPR003209">
    <property type="entry name" value="METHMP_CycHdrlase"/>
</dbReference>
<dbReference type="NCBIfam" id="TIGR03120">
    <property type="entry name" value="one_C_mch"/>
    <property type="match status" value="1"/>
</dbReference>
<dbReference type="Pfam" id="PF02289">
    <property type="entry name" value="MCH"/>
    <property type="match status" value="1"/>
</dbReference>
<dbReference type="SUPFAM" id="SSF56199">
    <property type="entry name" value="Methenyltetrahydromethanopterin cyclohydrolase"/>
    <property type="match status" value="1"/>
</dbReference>
<gene>
    <name type="primary">mch</name>
</gene>